<organism>
    <name type="scientific">Yersinia pestis bv. Antiqua (strain Antiqua)</name>
    <dbReference type="NCBI Taxonomy" id="360102"/>
    <lineage>
        <taxon>Bacteria</taxon>
        <taxon>Pseudomonadati</taxon>
        <taxon>Pseudomonadota</taxon>
        <taxon>Gammaproteobacteria</taxon>
        <taxon>Enterobacterales</taxon>
        <taxon>Yersiniaceae</taxon>
        <taxon>Yersinia</taxon>
    </lineage>
</organism>
<evidence type="ECO:0000250" key="1"/>
<evidence type="ECO:0000255" key="2"/>
<evidence type="ECO:0000305" key="3"/>
<proteinExistence type="inferred from homology"/>
<keyword id="KW-0997">Cell inner membrane</keyword>
<keyword id="KW-1003">Cell membrane</keyword>
<keyword id="KW-0472">Membrane</keyword>
<keyword id="KW-0812">Transmembrane</keyword>
<keyword id="KW-1133">Transmembrane helix</keyword>
<keyword id="KW-0813">Transport</keyword>
<sequence length="351" mass="37247">MLKFIQNNREGTALLAILTLFALLGIIDRNYFSLQTFTMIFSSAQILILLAIGATLVMLTRNIDVSVGSITGLCAVTVGMALNAGFGLAASCLFALLVGMVAGFFNGILVTWLRIPAIVATLGTLGLYRGLMLLLTGGKWIEGLPADLKSLSTPILFSISPIGWLTMLLILAMAWLLGKTAFGRSFYATGDNLQGARQLGVRTDSLRIFAFSMNGVMAALAGIVFASQIGFIPNQTGNGLEMKAIAACVLGGISLLGGTGTIIGAILGAFLLTQIDSVLVLLRLPAWWNDFIAGLVLLGVLVFDGRLRCAVERNIRQQKYARFTAQAIISDKKPTVSDNNPAASNKKKAAL</sequence>
<comment type="function">
    <text evidence="1">Part of the ABC transporter complex LsrABCD involved in autoinducer 2 (AI-2) import. Probably responsible for the translocation of the substrate across the membrane (By similarity).</text>
</comment>
<comment type="subunit">
    <text evidence="1">The complex is composed of two ATP-binding proteins (LsrA), two transmembrane proteins (LsrC and LsrD) and a solute-binding protein (LsrB).</text>
</comment>
<comment type="subcellular location">
    <subcellularLocation>
        <location evidence="1">Cell inner membrane</location>
        <topology evidence="1">Multi-pass membrane protein</topology>
    </subcellularLocation>
</comment>
<comment type="similarity">
    <text evidence="3">Belongs to the binding-protein-dependent transport system permease family. AraH/RbsC subfamily.</text>
</comment>
<feature type="chain" id="PRO_0000351357" description="Autoinducer 2 import system permease protein LsrC">
    <location>
        <begin position="1"/>
        <end position="351"/>
    </location>
</feature>
<feature type="transmembrane region" description="Helical" evidence="2">
    <location>
        <begin position="14"/>
        <end position="34"/>
    </location>
</feature>
<feature type="transmembrane region" description="Helical" evidence="2">
    <location>
        <begin position="39"/>
        <end position="59"/>
    </location>
</feature>
<feature type="transmembrane region" description="Helical" evidence="2">
    <location>
        <begin position="70"/>
        <end position="90"/>
    </location>
</feature>
<feature type="transmembrane region" description="Helical" evidence="2">
    <location>
        <begin position="93"/>
        <end position="113"/>
    </location>
</feature>
<feature type="transmembrane region" description="Helical" evidence="2">
    <location>
        <begin position="115"/>
        <end position="135"/>
    </location>
</feature>
<feature type="transmembrane region" description="Helical" evidence="2">
    <location>
        <begin position="155"/>
        <end position="175"/>
    </location>
</feature>
<feature type="transmembrane region" description="Helical" evidence="2">
    <location>
        <begin position="213"/>
        <end position="233"/>
    </location>
</feature>
<feature type="transmembrane region" description="Helical" evidence="2">
    <location>
        <begin position="252"/>
        <end position="272"/>
    </location>
</feature>
<feature type="transmembrane region" description="Helical" evidence="2">
    <location>
        <begin position="284"/>
        <end position="304"/>
    </location>
</feature>
<name>LSRC_YERPA</name>
<reference key="1">
    <citation type="journal article" date="2006" name="J. Bacteriol.">
        <title>Complete genome sequence of Yersinia pestis strains Antiqua and Nepal516: evidence of gene reduction in an emerging pathogen.</title>
        <authorList>
            <person name="Chain P.S.G."/>
            <person name="Hu P."/>
            <person name="Malfatti S.A."/>
            <person name="Radnedge L."/>
            <person name="Larimer F."/>
            <person name="Vergez L.M."/>
            <person name="Worsham P."/>
            <person name="Chu M.C."/>
            <person name="Andersen G.L."/>
        </authorList>
    </citation>
    <scope>NUCLEOTIDE SEQUENCE [LARGE SCALE GENOMIC DNA]</scope>
    <source>
        <strain>Antiqua</strain>
    </source>
</reference>
<dbReference type="EMBL" id="CP000308">
    <property type="protein sequence ID" value="ABG15835.1"/>
    <property type="molecule type" value="Genomic_DNA"/>
</dbReference>
<dbReference type="RefSeq" id="WP_002209191.1">
    <property type="nucleotide sequence ID" value="NZ_CP009906.1"/>
</dbReference>
<dbReference type="GeneID" id="57974199"/>
<dbReference type="KEGG" id="ypa:YPA_3874"/>
<dbReference type="Proteomes" id="UP000001971">
    <property type="component" value="Chromosome"/>
</dbReference>
<dbReference type="GO" id="GO:0005886">
    <property type="term" value="C:plasma membrane"/>
    <property type="evidence" value="ECO:0007669"/>
    <property type="project" value="UniProtKB-SubCell"/>
</dbReference>
<dbReference type="GO" id="GO:0022857">
    <property type="term" value="F:transmembrane transporter activity"/>
    <property type="evidence" value="ECO:0007669"/>
    <property type="project" value="InterPro"/>
</dbReference>
<dbReference type="CDD" id="cd06579">
    <property type="entry name" value="TM_PBP1_transp_AraH_like"/>
    <property type="match status" value="1"/>
</dbReference>
<dbReference type="InterPro" id="IPR001851">
    <property type="entry name" value="ABC_transp_permease"/>
</dbReference>
<dbReference type="NCBIfam" id="NF011961">
    <property type="entry name" value="PRK15432.1"/>
    <property type="match status" value="1"/>
</dbReference>
<dbReference type="PANTHER" id="PTHR32196">
    <property type="entry name" value="ABC TRANSPORTER PERMEASE PROTEIN YPHD-RELATED-RELATED"/>
    <property type="match status" value="1"/>
</dbReference>
<dbReference type="PANTHER" id="PTHR32196:SF29">
    <property type="entry name" value="AUTOINDUCER 2 IMPORT SYSTEM PERMEASE PROTEIN LSRC"/>
    <property type="match status" value="1"/>
</dbReference>
<dbReference type="Pfam" id="PF02653">
    <property type="entry name" value="BPD_transp_2"/>
    <property type="match status" value="1"/>
</dbReference>
<accession>Q1C137</accession>
<protein>
    <recommendedName>
        <fullName>Autoinducer 2 import system permease protein LsrC</fullName>
        <shortName>AI-2 import system permease protein LsrC</shortName>
    </recommendedName>
</protein>
<gene>
    <name type="primary">lsrC</name>
    <name type="ordered locus">YPA_3874</name>
</gene>